<feature type="chain" id="PRO_0000159171" description="Ferredoxin">
    <location>
        <begin position="1"/>
        <end position="78"/>
    </location>
</feature>
<feature type="domain" description="4Fe-4S ferredoxin-type 1" evidence="2">
    <location>
        <begin position="2"/>
        <end position="29"/>
    </location>
</feature>
<feature type="domain" description="4Fe-4S ferredoxin-type 2" evidence="2">
    <location>
        <begin position="30"/>
        <end position="59"/>
    </location>
</feature>
<feature type="binding site" evidence="1">
    <location>
        <position position="8"/>
    </location>
    <ligand>
        <name>[3Fe-4S] cluster</name>
        <dbReference type="ChEBI" id="CHEBI:21137"/>
    </ligand>
</feature>
<feature type="binding site" evidence="1">
    <location>
        <position position="16"/>
    </location>
    <ligand>
        <name>[3Fe-4S] cluster</name>
        <dbReference type="ChEBI" id="CHEBI:21137"/>
    </ligand>
</feature>
<feature type="binding site" evidence="1">
    <location>
        <position position="20"/>
    </location>
    <ligand>
        <name>[4Fe-4S] cluster</name>
        <dbReference type="ChEBI" id="CHEBI:49883"/>
    </ligand>
</feature>
<feature type="binding site" evidence="1">
    <location>
        <position position="39"/>
    </location>
    <ligand>
        <name>[4Fe-4S] cluster</name>
        <dbReference type="ChEBI" id="CHEBI:49883"/>
    </ligand>
</feature>
<feature type="binding site" evidence="1">
    <location>
        <position position="42"/>
    </location>
    <ligand>
        <name>[4Fe-4S] cluster</name>
        <dbReference type="ChEBI" id="CHEBI:49883"/>
    </ligand>
</feature>
<feature type="binding site" evidence="1">
    <location>
        <position position="45"/>
    </location>
    <ligand>
        <name>[4Fe-4S] cluster</name>
        <dbReference type="ChEBI" id="CHEBI:49883"/>
    </ligand>
</feature>
<feature type="binding site" evidence="1">
    <location>
        <position position="49"/>
    </location>
    <ligand>
        <name>[3Fe-4S] cluster</name>
        <dbReference type="ChEBI" id="CHEBI:21137"/>
    </ligand>
</feature>
<dbReference type="PIR" id="A00215">
    <property type="entry name" value="FEBSA"/>
</dbReference>
<dbReference type="SMR" id="P03941"/>
<dbReference type="OMA" id="DRMLYIH"/>
<dbReference type="GO" id="GO:0051538">
    <property type="term" value="F:3 iron, 4 sulfur cluster binding"/>
    <property type="evidence" value="ECO:0007669"/>
    <property type="project" value="UniProtKB-KW"/>
</dbReference>
<dbReference type="GO" id="GO:0051539">
    <property type="term" value="F:4 iron, 4 sulfur cluster binding"/>
    <property type="evidence" value="ECO:0007669"/>
    <property type="project" value="UniProtKB-KW"/>
</dbReference>
<dbReference type="GO" id="GO:0009055">
    <property type="term" value="F:electron transfer activity"/>
    <property type="evidence" value="ECO:0007669"/>
    <property type="project" value="InterPro"/>
</dbReference>
<dbReference type="GO" id="GO:0046872">
    <property type="term" value="F:metal ion binding"/>
    <property type="evidence" value="ECO:0007669"/>
    <property type="project" value="UniProtKB-KW"/>
</dbReference>
<dbReference type="Gene3D" id="3.30.70.20">
    <property type="match status" value="1"/>
</dbReference>
<dbReference type="InterPro" id="IPR017896">
    <property type="entry name" value="4Fe4S_Fe-S-bd"/>
</dbReference>
<dbReference type="InterPro" id="IPR017900">
    <property type="entry name" value="4Fe4S_Fe_S_CS"/>
</dbReference>
<dbReference type="InterPro" id="IPR000813">
    <property type="entry name" value="7Fe_ferredoxin"/>
</dbReference>
<dbReference type="InterPro" id="IPR050294">
    <property type="entry name" value="RnfB_subfamily"/>
</dbReference>
<dbReference type="PANTHER" id="PTHR42859:SF2">
    <property type="entry name" value="FERREDOXIN"/>
    <property type="match status" value="1"/>
</dbReference>
<dbReference type="PANTHER" id="PTHR42859">
    <property type="entry name" value="OXIDOREDUCTASE"/>
    <property type="match status" value="1"/>
</dbReference>
<dbReference type="Pfam" id="PF00037">
    <property type="entry name" value="Fer4"/>
    <property type="match status" value="1"/>
</dbReference>
<dbReference type="Pfam" id="PF12800">
    <property type="entry name" value="Fer4_4"/>
    <property type="match status" value="1"/>
</dbReference>
<dbReference type="PRINTS" id="PR00354">
    <property type="entry name" value="7FE8SFRDOXIN"/>
</dbReference>
<dbReference type="SUPFAM" id="SSF54862">
    <property type="entry name" value="4Fe-4S ferredoxins"/>
    <property type="match status" value="1"/>
</dbReference>
<dbReference type="PROSITE" id="PS00198">
    <property type="entry name" value="4FE4S_FER_1"/>
    <property type="match status" value="1"/>
</dbReference>
<dbReference type="PROSITE" id="PS51379">
    <property type="entry name" value="4FE4S_FER_2"/>
    <property type="match status" value="2"/>
</dbReference>
<accession>P03941</accession>
<comment type="function">
    <text>Ferredoxins are iron-sulfur proteins that transfer electrons in a wide variety of metabolic reactions.</text>
</comment>
<comment type="cofactor">
    <cofactor evidence="3">
        <name>[3Fe-4S] cluster</name>
        <dbReference type="ChEBI" id="CHEBI:21137"/>
    </cofactor>
    <text evidence="3">Binds 1 [3Fe-4S] cluster.</text>
</comment>
<comment type="cofactor">
    <cofactor evidence="3">
        <name>[4Fe-4S] cluster</name>
        <dbReference type="ChEBI" id="CHEBI:49883"/>
    </cofactor>
    <text evidence="3">Binds 1 [4Fe-4S] cluster.</text>
</comment>
<name>FER_ALIAC</name>
<sequence length="78" mass="8872">PFVITSPCIGEKAADCVETCPVDAIHEGPDQYYIDPDLCIDCAACEPVCPVNAIYQEEFVPEDEKEFIEKNRNFFRNR</sequence>
<evidence type="ECO:0000250" key="1"/>
<evidence type="ECO:0000255" key="2">
    <source>
        <dbReference type="PROSITE-ProRule" id="PRU00711"/>
    </source>
</evidence>
<evidence type="ECO:0000305" key="3"/>
<keyword id="KW-0003">3Fe-4S</keyword>
<keyword id="KW-0004">4Fe-4S</keyword>
<keyword id="KW-0903">Direct protein sequencing</keyword>
<keyword id="KW-0249">Electron transport</keyword>
<keyword id="KW-0408">Iron</keyword>
<keyword id="KW-0411">Iron-sulfur</keyword>
<keyword id="KW-0479">Metal-binding</keyword>
<keyword id="KW-0677">Repeat</keyword>
<keyword id="KW-0813">Transport</keyword>
<protein>
    <recommendedName>
        <fullName>Ferredoxin</fullName>
    </recommendedName>
</protein>
<proteinExistence type="evidence at protein level"/>
<reference key="1">
    <citation type="journal article" date="1985" name="Biol. Chem. Hoppe-Seyler">
        <title>Purification, amino-acid sequence and some properties of the ferredoxin isolated from Bacillus acidocaldarius.</title>
        <authorList>
            <person name="Schlatter D."/>
            <person name="Waldvogel S."/>
            <person name="Zulli F."/>
            <person name="Suter F."/>
            <person name="Portmann W."/>
            <person name="Zuber H."/>
        </authorList>
    </citation>
    <scope>PROTEIN SEQUENCE</scope>
</reference>
<organism>
    <name type="scientific">Alicyclobacillus acidocaldarius subsp. acidocaldarius</name>
    <name type="common">Bacillus acidocaldarius</name>
    <dbReference type="NCBI Taxonomy" id="1388"/>
    <lineage>
        <taxon>Bacteria</taxon>
        <taxon>Bacillati</taxon>
        <taxon>Bacillota</taxon>
        <taxon>Bacilli</taxon>
        <taxon>Bacillales</taxon>
        <taxon>Alicyclobacillaceae</taxon>
        <taxon>Alicyclobacillus</taxon>
    </lineage>
</organism>